<sequence>MKVKIVTPYGIVYDRESDFISFRTVEGSMGILPRRAPIVTQLSVCDVKIKSGDDEYHLKVAGGFLLCDGKDVIIITEEAGREEDISPDRFMEARERVERVRRFFQSSL</sequence>
<accession>Q9X1U5</accession>
<name>ATPE_THEMA</name>
<dbReference type="EMBL" id="AE000512">
    <property type="protein sequence ID" value="AAD36676.1"/>
    <property type="molecule type" value="Genomic_DNA"/>
</dbReference>
<dbReference type="PIR" id="C72231">
    <property type="entry name" value="C72231"/>
</dbReference>
<dbReference type="RefSeq" id="NP_229409.1">
    <property type="nucleotide sequence ID" value="NC_000853.1"/>
</dbReference>
<dbReference type="RefSeq" id="WP_004082057.1">
    <property type="nucleotide sequence ID" value="NZ_CP011107.1"/>
</dbReference>
<dbReference type="SMR" id="Q9X1U5"/>
<dbReference type="FunCoup" id="Q9X1U5">
    <property type="interactions" value="339"/>
</dbReference>
<dbReference type="STRING" id="243274.TM_1609"/>
<dbReference type="PaxDb" id="243274-THEMA_06205"/>
<dbReference type="EnsemblBacteria" id="AAD36676">
    <property type="protein sequence ID" value="AAD36676"/>
    <property type="gene ID" value="TM_1609"/>
</dbReference>
<dbReference type="KEGG" id="tma:TM1609"/>
<dbReference type="KEGG" id="tmi:THEMA_06205"/>
<dbReference type="KEGG" id="tmm:Tmari_1617"/>
<dbReference type="KEGG" id="tmw:THMA_1649"/>
<dbReference type="eggNOG" id="COG0355">
    <property type="taxonomic scope" value="Bacteria"/>
</dbReference>
<dbReference type="InParanoid" id="Q9X1U5"/>
<dbReference type="OrthoDB" id="47229at2"/>
<dbReference type="Proteomes" id="UP000008183">
    <property type="component" value="Chromosome"/>
</dbReference>
<dbReference type="GO" id="GO:0005886">
    <property type="term" value="C:plasma membrane"/>
    <property type="evidence" value="ECO:0007669"/>
    <property type="project" value="UniProtKB-SubCell"/>
</dbReference>
<dbReference type="GO" id="GO:0045259">
    <property type="term" value="C:proton-transporting ATP synthase complex"/>
    <property type="evidence" value="ECO:0007669"/>
    <property type="project" value="UniProtKB-KW"/>
</dbReference>
<dbReference type="GO" id="GO:0005524">
    <property type="term" value="F:ATP binding"/>
    <property type="evidence" value="ECO:0007669"/>
    <property type="project" value="UniProtKB-UniRule"/>
</dbReference>
<dbReference type="GO" id="GO:0046933">
    <property type="term" value="F:proton-transporting ATP synthase activity, rotational mechanism"/>
    <property type="evidence" value="ECO:0007669"/>
    <property type="project" value="UniProtKB-UniRule"/>
</dbReference>
<dbReference type="GO" id="GO:0015986">
    <property type="term" value="P:proton motive force-driven ATP synthesis"/>
    <property type="evidence" value="ECO:0000318"/>
    <property type="project" value="GO_Central"/>
</dbReference>
<dbReference type="CDD" id="cd12152">
    <property type="entry name" value="F1-ATPase_delta"/>
    <property type="match status" value="1"/>
</dbReference>
<dbReference type="Gene3D" id="2.60.15.10">
    <property type="entry name" value="F0F1 ATP synthase delta/epsilon subunit, N-terminal"/>
    <property type="match status" value="1"/>
</dbReference>
<dbReference type="HAMAP" id="MF_00530">
    <property type="entry name" value="ATP_synth_epsil_bac"/>
    <property type="match status" value="1"/>
</dbReference>
<dbReference type="InterPro" id="IPR001469">
    <property type="entry name" value="ATP_synth_F1_dsu/esu"/>
</dbReference>
<dbReference type="InterPro" id="IPR020546">
    <property type="entry name" value="ATP_synth_F1_dsu/esu_N"/>
</dbReference>
<dbReference type="InterPro" id="IPR036771">
    <property type="entry name" value="ATPsynth_dsu/esu_N"/>
</dbReference>
<dbReference type="NCBIfam" id="NF009985">
    <property type="entry name" value="PRK13451.1"/>
    <property type="match status" value="1"/>
</dbReference>
<dbReference type="PANTHER" id="PTHR13822">
    <property type="entry name" value="ATP SYNTHASE DELTA/EPSILON CHAIN"/>
    <property type="match status" value="1"/>
</dbReference>
<dbReference type="PANTHER" id="PTHR13822:SF10">
    <property type="entry name" value="ATP SYNTHASE EPSILON CHAIN, CHLOROPLASTIC"/>
    <property type="match status" value="1"/>
</dbReference>
<dbReference type="Pfam" id="PF02823">
    <property type="entry name" value="ATP-synt_DE_N"/>
    <property type="match status" value="1"/>
</dbReference>
<dbReference type="SUPFAM" id="SSF51344">
    <property type="entry name" value="Epsilon subunit of F1F0-ATP synthase N-terminal domain"/>
    <property type="match status" value="1"/>
</dbReference>
<reference key="1">
    <citation type="journal article" date="1999" name="Nature">
        <title>Evidence for lateral gene transfer between Archaea and Bacteria from genome sequence of Thermotoga maritima.</title>
        <authorList>
            <person name="Nelson K.E."/>
            <person name="Clayton R.A."/>
            <person name="Gill S.R."/>
            <person name="Gwinn M.L."/>
            <person name="Dodson R.J."/>
            <person name="Haft D.H."/>
            <person name="Hickey E.K."/>
            <person name="Peterson J.D."/>
            <person name="Nelson W.C."/>
            <person name="Ketchum K.A."/>
            <person name="McDonald L.A."/>
            <person name="Utterback T.R."/>
            <person name="Malek J.A."/>
            <person name="Linher K.D."/>
            <person name="Garrett M.M."/>
            <person name="Stewart A.M."/>
            <person name="Cotton M.D."/>
            <person name="Pratt M.S."/>
            <person name="Phillips C.A."/>
            <person name="Richardson D.L."/>
            <person name="Heidelberg J.F."/>
            <person name="Sutton G.G."/>
            <person name="Fleischmann R.D."/>
            <person name="Eisen J.A."/>
            <person name="White O."/>
            <person name="Salzberg S.L."/>
            <person name="Smith H.O."/>
            <person name="Venter J.C."/>
            <person name="Fraser C.M."/>
        </authorList>
    </citation>
    <scope>NUCLEOTIDE SEQUENCE [LARGE SCALE GENOMIC DNA]</scope>
    <source>
        <strain>ATCC 43589 / DSM 3109 / JCM 10099 / NBRC 100826 / MSB8</strain>
    </source>
</reference>
<keyword id="KW-0066">ATP synthesis</keyword>
<keyword id="KW-0997">Cell inner membrane</keyword>
<keyword id="KW-1003">Cell membrane</keyword>
<keyword id="KW-0139">CF(1)</keyword>
<keyword id="KW-0375">Hydrogen ion transport</keyword>
<keyword id="KW-0406">Ion transport</keyword>
<keyword id="KW-0472">Membrane</keyword>
<keyword id="KW-1185">Reference proteome</keyword>
<keyword id="KW-0813">Transport</keyword>
<organism>
    <name type="scientific">Thermotoga maritima (strain ATCC 43589 / DSM 3109 / JCM 10099 / NBRC 100826 / MSB8)</name>
    <dbReference type="NCBI Taxonomy" id="243274"/>
    <lineage>
        <taxon>Bacteria</taxon>
        <taxon>Thermotogati</taxon>
        <taxon>Thermotogota</taxon>
        <taxon>Thermotogae</taxon>
        <taxon>Thermotogales</taxon>
        <taxon>Thermotogaceae</taxon>
        <taxon>Thermotoga</taxon>
    </lineage>
</organism>
<proteinExistence type="inferred from homology"/>
<gene>
    <name evidence="1" type="primary">atpC</name>
    <name type="ordered locus">TM_1609</name>
</gene>
<comment type="function">
    <text evidence="1">Produces ATP from ADP in the presence of a proton gradient across the membrane.</text>
</comment>
<comment type="subunit">
    <text>F-type ATPases have 2 components, CF(1) - the catalytic core - and CF(0) - the membrane proton channel. CF(1) has five subunits: alpha(3), beta(3), gamma(1), delta(1), epsilon(1). CF(0) has three main subunits: a, b and c.</text>
</comment>
<comment type="subcellular location">
    <subcellularLocation>
        <location evidence="1">Cell inner membrane</location>
        <topology evidence="1">Peripheral membrane protein</topology>
    </subcellularLocation>
</comment>
<comment type="similarity">
    <text evidence="1">Belongs to the ATPase epsilon chain family.</text>
</comment>
<evidence type="ECO:0000255" key="1">
    <source>
        <dbReference type="HAMAP-Rule" id="MF_00530"/>
    </source>
</evidence>
<feature type="chain" id="PRO_0000188231" description="ATP synthase epsilon chain">
    <location>
        <begin position="1"/>
        <end position="108"/>
    </location>
</feature>
<protein>
    <recommendedName>
        <fullName evidence="1">ATP synthase epsilon chain</fullName>
    </recommendedName>
    <alternativeName>
        <fullName evidence="1">ATP synthase F1 sector epsilon subunit</fullName>
    </alternativeName>
    <alternativeName>
        <fullName evidence="1">F-ATPase epsilon subunit</fullName>
    </alternativeName>
</protein>